<proteinExistence type="inferred from homology"/>
<reference key="1">
    <citation type="submission" date="2008-12" db="EMBL/GenBank/DDBJ databases">
        <title>Complete sequence of chromosome of Shewanella baltica OS223.</title>
        <authorList>
            <consortium name="US DOE Joint Genome Institute"/>
            <person name="Lucas S."/>
            <person name="Copeland A."/>
            <person name="Lapidus A."/>
            <person name="Glavina del Rio T."/>
            <person name="Dalin E."/>
            <person name="Tice H."/>
            <person name="Bruce D."/>
            <person name="Goodwin L."/>
            <person name="Pitluck S."/>
            <person name="Chertkov O."/>
            <person name="Meincke L."/>
            <person name="Brettin T."/>
            <person name="Detter J.C."/>
            <person name="Han C."/>
            <person name="Kuske C.R."/>
            <person name="Larimer F."/>
            <person name="Land M."/>
            <person name="Hauser L."/>
            <person name="Kyrpides N."/>
            <person name="Ovchinnikova G."/>
            <person name="Brettar I."/>
            <person name="Rodrigues J."/>
            <person name="Konstantinidis K."/>
            <person name="Tiedje J."/>
        </authorList>
    </citation>
    <scope>NUCLEOTIDE SEQUENCE [LARGE SCALE GENOMIC DNA]</scope>
    <source>
        <strain>OS223</strain>
    </source>
</reference>
<accession>B8EBG0</accession>
<comment type="catalytic activity">
    <reaction evidence="1">
        <text>L-citrulline + L-aspartate + ATP = 2-(N(omega)-L-arginino)succinate + AMP + diphosphate + H(+)</text>
        <dbReference type="Rhea" id="RHEA:10932"/>
        <dbReference type="ChEBI" id="CHEBI:15378"/>
        <dbReference type="ChEBI" id="CHEBI:29991"/>
        <dbReference type="ChEBI" id="CHEBI:30616"/>
        <dbReference type="ChEBI" id="CHEBI:33019"/>
        <dbReference type="ChEBI" id="CHEBI:57472"/>
        <dbReference type="ChEBI" id="CHEBI:57743"/>
        <dbReference type="ChEBI" id="CHEBI:456215"/>
        <dbReference type="EC" id="6.3.4.5"/>
    </reaction>
</comment>
<comment type="pathway">
    <text evidence="1">Amino-acid biosynthesis; L-arginine biosynthesis; L-arginine from L-ornithine and carbamoyl phosphate: step 2/3.</text>
</comment>
<comment type="subunit">
    <text evidence="1">Homotetramer.</text>
</comment>
<comment type="subcellular location">
    <subcellularLocation>
        <location evidence="1">Cytoplasm</location>
    </subcellularLocation>
</comment>
<comment type="similarity">
    <text evidence="1">Belongs to the argininosuccinate synthase family. Type 1 subfamily.</text>
</comment>
<sequence length="412" mass="45079">MSIEIKNTGVKKVVLAYSGGLDTSAIIPWLKENYDNCEIIAFCADVGQGEEELVGLTEKALASGASECHIVDLKEEFVKEYIYPTIASGAIYEGTYLLGTSMARPIIAKAQVEVARKVGADALCHGCTGKGNDQVRFEGCFAALAPDLKVIAPWREWTMQSREDLLAYLAERDIKTSASATKIYSRDANAFHISHEGGELEDPWNEPSKGVWTLTADPEDAPNKPEYVSLEVEHGRITKVNGEALTPYAALMTLNAIAAPHGVGRIDITENRLVGMKSRGCYETPGGTVMFAALRAIEELVLDKTSRNWREQVAAQMAHLVYDGRWFTPLCKSLLAASESLAESVNGEVVVKLYKGQATAVKKRSPNSLYSEAFATFGEDQVYDQKHAEGFIRLYSLASRIRALNANDVKSK</sequence>
<protein>
    <recommendedName>
        <fullName evidence="1">Argininosuccinate synthase</fullName>
        <ecNumber evidence="1">6.3.4.5</ecNumber>
    </recommendedName>
    <alternativeName>
        <fullName evidence="1">Citrulline--aspartate ligase</fullName>
    </alternativeName>
</protein>
<organism>
    <name type="scientific">Shewanella baltica (strain OS223)</name>
    <dbReference type="NCBI Taxonomy" id="407976"/>
    <lineage>
        <taxon>Bacteria</taxon>
        <taxon>Pseudomonadati</taxon>
        <taxon>Pseudomonadota</taxon>
        <taxon>Gammaproteobacteria</taxon>
        <taxon>Alteromonadales</taxon>
        <taxon>Shewanellaceae</taxon>
        <taxon>Shewanella</taxon>
    </lineage>
</organism>
<gene>
    <name evidence="1" type="primary">argG</name>
    <name type="ordered locus">Sbal223_4011</name>
</gene>
<feature type="chain" id="PRO_1000116291" description="Argininosuccinate synthase">
    <location>
        <begin position="1"/>
        <end position="412"/>
    </location>
</feature>
<feature type="binding site" evidence="1">
    <location>
        <begin position="16"/>
        <end position="24"/>
    </location>
    <ligand>
        <name>ATP</name>
        <dbReference type="ChEBI" id="CHEBI:30616"/>
    </ligand>
</feature>
<feature type="binding site" evidence="1">
    <location>
        <position position="44"/>
    </location>
    <ligand>
        <name>ATP</name>
        <dbReference type="ChEBI" id="CHEBI:30616"/>
    </ligand>
</feature>
<feature type="binding site" evidence="1">
    <location>
        <position position="96"/>
    </location>
    <ligand>
        <name>L-citrulline</name>
        <dbReference type="ChEBI" id="CHEBI:57743"/>
    </ligand>
</feature>
<feature type="binding site" evidence="1">
    <location>
        <position position="101"/>
    </location>
    <ligand>
        <name>L-citrulline</name>
        <dbReference type="ChEBI" id="CHEBI:57743"/>
    </ligand>
</feature>
<feature type="binding site" evidence="1">
    <location>
        <position position="126"/>
    </location>
    <ligand>
        <name>ATP</name>
        <dbReference type="ChEBI" id="CHEBI:30616"/>
    </ligand>
</feature>
<feature type="binding site" evidence="1">
    <location>
        <position position="128"/>
    </location>
    <ligand>
        <name>L-aspartate</name>
        <dbReference type="ChEBI" id="CHEBI:29991"/>
    </ligand>
</feature>
<feature type="binding site" evidence="1">
    <location>
        <position position="132"/>
    </location>
    <ligand>
        <name>L-aspartate</name>
        <dbReference type="ChEBI" id="CHEBI:29991"/>
    </ligand>
</feature>
<feature type="binding site" evidence="1">
    <location>
        <position position="132"/>
    </location>
    <ligand>
        <name>L-citrulline</name>
        <dbReference type="ChEBI" id="CHEBI:57743"/>
    </ligand>
</feature>
<feature type="binding site" evidence="1">
    <location>
        <position position="133"/>
    </location>
    <ligand>
        <name>L-aspartate</name>
        <dbReference type="ChEBI" id="CHEBI:29991"/>
    </ligand>
</feature>
<feature type="binding site" evidence="1">
    <location>
        <position position="136"/>
    </location>
    <ligand>
        <name>L-citrulline</name>
        <dbReference type="ChEBI" id="CHEBI:57743"/>
    </ligand>
</feature>
<feature type="binding site" evidence="1">
    <location>
        <position position="185"/>
    </location>
    <ligand>
        <name>L-citrulline</name>
        <dbReference type="ChEBI" id="CHEBI:57743"/>
    </ligand>
</feature>
<feature type="binding site" evidence="1">
    <location>
        <position position="194"/>
    </location>
    <ligand>
        <name>L-citrulline</name>
        <dbReference type="ChEBI" id="CHEBI:57743"/>
    </ligand>
</feature>
<feature type="binding site" evidence="1">
    <location>
        <position position="270"/>
    </location>
    <ligand>
        <name>L-citrulline</name>
        <dbReference type="ChEBI" id="CHEBI:57743"/>
    </ligand>
</feature>
<feature type="binding site" evidence="1">
    <location>
        <position position="282"/>
    </location>
    <ligand>
        <name>L-citrulline</name>
        <dbReference type="ChEBI" id="CHEBI:57743"/>
    </ligand>
</feature>
<keyword id="KW-0028">Amino-acid biosynthesis</keyword>
<keyword id="KW-0055">Arginine biosynthesis</keyword>
<keyword id="KW-0067">ATP-binding</keyword>
<keyword id="KW-0963">Cytoplasm</keyword>
<keyword id="KW-0436">Ligase</keyword>
<keyword id="KW-0547">Nucleotide-binding</keyword>
<dbReference type="EC" id="6.3.4.5" evidence="1"/>
<dbReference type="EMBL" id="CP001252">
    <property type="protein sequence ID" value="ACK48484.1"/>
    <property type="molecule type" value="Genomic_DNA"/>
</dbReference>
<dbReference type="RefSeq" id="WP_006083550.1">
    <property type="nucleotide sequence ID" value="NC_011663.1"/>
</dbReference>
<dbReference type="SMR" id="B8EBG0"/>
<dbReference type="KEGG" id="sbp:Sbal223_4011"/>
<dbReference type="HOGENOM" id="CLU_032784_4_2_6"/>
<dbReference type="UniPathway" id="UPA00068">
    <property type="reaction ID" value="UER00113"/>
</dbReference>
<dbReference type="Proteomes" id="UP000002507">
    <property type="component" value="Chromosome"/>
</dbReference>
<dbReference type="GO" id="GO:0005737">
    <property type="term" value="C:cytoplasm"/>
    <property type="evidence" value="ECO:0007669"/>
    <property type="project" value="UniProtKB-SubCell"/>
</dbReference>
<dbReference type="GO" id="GO:0004055">
    <property type="term" value="F:argininosuccinate synthase activity"/>
    <property type="evidence" value="ECO:0007669"/>
    <property type="project" value="UniProtKB-UniRule"/>
</dbReference>
<dbReference type="GO" id="GO:0005524">
    <property type="term" value="F:ATP binding"/>
    <property type="evidence" value="ECO:0007669"/>
    <property type="project" value="UniProtKB-UniRule"/>
</dbReference>
<dbReference type="GO" id="GO:0000053">
    <property type="term" value="P:argininosuccinate metabolic process"/>
    <property type="evidence" value="ECO:0007669"/>
    <property type="project" value="TreeGrafter"/>
</dbReference>
<dbReference type="GO" id="GO:0006526">
    <property type="term" value="P:L-arginine biosynthetic process"/>
    <property type="evidence" value="ECO:0007669"/>
    <property type="project" value="UniProtKB-UniRule"/>
</dbReference>
<dbReference type="GO" id="GO:0000050">
    <property type="term" value="P:urea cycle"/>
    <property type="evidence" value="ECO:0007669"/>
    <property type="project" value="TreeGrafter"/>
</dbReference>
<dbReference type="CDD" id="cd01999">
    <property type="entry name" value="ASS"/>
    <property type="match status" value="1"/>
</dbReference>
<dbReference type="FunFam" id="1.20.5.470:FF:000005">
    <property type="entry name" value="Argininosuccinate synthase"/>
    <property type="match status" value="1"/>
</dbReference>
<dbReference type="FunFam" id="3.40.50.620:FF:000019">
    <property type="entry name" value="Argininosuccinate synthase"/>
    <property type="match status" value="1"/>
</dbReference>
<dbReference type="FunFam" id="3.90.1260.10:FF:000007">
    <property type="entry name" value="Argininosuccinate synthase"/>
    <property type="match status" value="1"/>
</dbReference>
<dbReference type="Gene3D" id="3.90.1260.10">
    <property type="entry name" value="Argininosuccinate synthetase, chain A, domain 2"/>
    <property type="match status" value="1"/>
</dbReference>
<dbReference type="Gene3D" id="3.40.50.620">
    <property type="entry name" value="HUPs"/>
    <property type="match status" value="1"/>
</dbReference>
<dbReference type="Gene3D" id="1.20.5.470">
    <property type="entry name" value="Single helix bin"/>
    <property type="match status" value="1"/>
</dbReference>
<dbReference type="HAMAP" id="MF_00005">
    <property type="entry name" value="Arg_succ_synth_type1"/>
    <property type="match status" value="1"/>
</dbReference>
<dbReference type="InterPro" id="IPR048268">
    <property type="entry name" value="Arginosuc_syn_C"/>
</dbReference>
<dbReference type="InterPro" id="IPR048267">
    <property type="entry name" value="Arginosuc_syn_N"/>
</dbReference>
<dbReference type="InterPro" id="IPR001518">
    <property type="entry name" value="Arginosuc_synth"/>
</dbReference>
<dbReference type="InterPro" id="IPR018223">
    <property type="entry name" value="Arginosuc_synth_CS"/>
</dbReference>
<dbReference type="InterPro" id="IPR023434">
    <property type="entry name" value="Arginosuc_synth_type_1_subfam"/>
</dbReference>
<dbReference type="InterPro" id="IPR024074">
    <property type="entry name" value="AS_cat/multimer_dom_body"/>
</dbReference>
<dbReference type="InterPro" id="IPR014729">
    <property type="entry name" value="Rossmann-like_a/b/a_fold"/>
</dbReference>
<dbReference type="NCBIfam" id="TIGR00032">
    <property type="entry name" value="argG"/>
    <property type="match status" value="1"/>
</dbReference>
<dbReference type="NCBIfam" id="NF001770">
    <property type="entry name" value="PRK00509.1"/>
    <property type="match status" value="1"/>
</dbReference>
<dbReference type="PANTHER" id="PTHR11587">
    <property type="entry name" value="ARGININOSUCCINATE SYNTHASE"/>
    <property type="match status" value="1"/>
</dbReference>
<dbReference type="PANTHER" id="PTHR11587:SF2">
    <property type="entry name" value="ARGININOSUCCINATE SYNTHASE"/>
    <property type="match status" value="1"/>
</dbReference>
<dbReference type="Pfam" id="PF20979">
    <property type="entry name" value="Arginosuc_syn_C"/>
    <property type="match status" value="1"/>
</dbReference>
<dbReference type="Pfam" id="PF00764">
    <property type="entry name" value="Arginosuc_synth"/>
    <property type="match status" value="1"/>
</dbReference>
<dbReference type="SUPFAM" id="SSF52402">
    <property type="entry name" value="Adenine nucleotide alpha hydrolases-like"/>
    <property type="match status" value="1"/>
</dbReference>
<dbReference type="SUPFAM" id="SSF69864">
    <property type="entry name" value="Argininosuccinate synthetase, C-terminal domain"/>
    <property type="match status" value="1"/>
</dbReference>
<dbReference type="PROSITE" id="PS00564">
    <property type="entry name" value="ARGININOSUCCIN_SYN_1"/>
    <property type="match status" value="1"/>
</dbReference>
<dbReference type="PROSITE" id="PS00565">
    <property type="entry name" value="ARGININOSUCCIN_SYN_2"/>
    <property type="match status" value="1"/>
</dbReference>
<evidence type="ECO:0000255" key="1">
    <source>
        <dbReference type="HAMAP-Rule" id="MF_00005"/>
    </source>
</evidence>
<name>ASSY_SHEB2</name>